<accession>Q7K755</accession>
<accession>Q9XW72</accession>
<proteinExistence type="inferred from homology"/>
<sequence>MLLLWRRKTVGLICLFSILLTIYLYVSMYPEDNERVWNSGNADIQRKHEKLNNGGQGRHDFDDDEGAEKDEEDAVEKQNIAAPPLPKSFTTFPDRSKEIEIDTDLLGKINGKAEDDLQVEGYKKYQFNGLLSDRIGSRRKIKDSRNARCSSLTYSDSLPAASIVVCYFNESPSVLIRMVNSIFDRTKPEHLHEILLVDDSSEWSNATDEAIKYREKHIIQWEKVKFLKTDKNEGLIRAKIFGARRANGEVLVFLDSHCEVNEEWLPPLLDQIKQNRRRVVCPIIDIIDAITMKYVESPVCTGGVNWAMTFKWDYPHRSYFEDPMNYVNPLKSPTMAGGLFAIDKEYFFEIGSYDEGMDVWGAENVEISVRIWTCGGELLIMPCSRVGHIFRRQRPYGIKTDSMGKNSVRLARVWLDEYLENFFEARPNYRTFTDYGDLTSRISLRRNLQCKPFKWYLENIYPELLPDNTPNQLNNQILVAGKKYLIKMANGTHCLSAENSQGRIANGNRVEMRKCNHMERMQQWKYSSTNELRPMGSSRMCLDSLRGISVILCHNQGAHQMWQVSNAGKLYSRSVNKCATGSNDVSALSTLKFCSLANSFQFVEL</sequence>
<evidence type="ECO:0000250" key="1"/>
<evidence type="ECO:0000255" key="2"/>
<evidence type="ECO:0000255" key="3">
    <source>
        <dbReference type="PROSITE-ProRule" id="PRU00174"/>
    </source>
</evidence>
<evidence type="ECO:0000256" key="4">
    <source>
        <dbReference type="SAM" id="MobiDB-lite"/>
    </source>
</evidence>
<evidence type="ECO:0000305" key="5"/>
<organism>
    <name type="scientific">Caenorhabditis elegans</name>
    <dbReference type="NCBI Taxonomy" id="6239"/>
    <lineage>
        <taxon>Eukaryota</taxon>
        <taxon>Metazoa</taxon>
        <taxon>Ecdysozoa</taxon>
        <taxon>Nematoda</taxon>
        <taxon>Chromadorea</taxon>
        <taxon>Rhabditida</taxon>
        <taxon>Rhabditina</taxon>
        <taxon>Rhabditomorpha</taxon>
        <taxon>Rhabditoidea</taxon>
        <taxon>Rhabditidae</taxon>
        <taxon>Peloderinae</taxon>
        <taxon>Caenorhabditis</taxon>
    </lineage>
</organism>
<feature type="chain" id="PRO_0000059154" description="Putative polypeptide N-acetylgalactosaminyltransferase 11">
    <location>
        <begin position="1"/>
        <end position="605"/>
    </location>
</feature>
<feature type="topological domain" description="Cytoplasmic" evidence="2">
    <location>
        <begin position="1"/>
        <end position="11"/>
    </location>
</feature>
<feature type="transmembrane region" description="Helical; Signal-anchor for type II membrane protein" evidence="2">
    <location>
        <begin position="12"/>
        <end position="29"/>
    </location>
</feature>
<feature type="topological domain" description="Lumenal" evidence="2">
    <location>
        <begin position="30"/>
        <end position="605"/>
    </location>
</feature>
<feature type="domain" description="Ricin B-type lectin" evidence="3">
    <location>
        <begin position="481"/>
        <end position="605"/>
    </location>
</feature>
<feature type="region of interest" description="Disordered" evidence="4">
    <location>
        <begin position="49"/>
        <end position="87"/>
    </location>
</feature>
<feature type="region of interest" description="Catalytic subdomain A">
    <location>
        <begin position="158"/>
        <end position="271"/>
    </location>
</feature>
<feature type="region of interest" description="Catalytic subdomain B">
    <location>
        <begin position="329"/>
        <end position="391"/>
    </location>
</feature>
<feature type="compositionally biased region" description="Acidic residues" evidence="4">
    <location>
        <begin position="62"/>
        <end position="74"/>
    </location>
</feature>
<feature type="binding site" evidence="1">
    <location>
        <position position="199"/>
    </location>
    <ligand>
        <name>substrate</name>
    </ligand>
</feature>
<feature type="binding site" evidence="1">
    <location>
        <position position="255"/>
    </location>
    <ligand>
        <name>Mn(2+)</name>
        <dbReference type="ChEBI" id="CHEBI:29035"/>
    </ligand>
</feature>
<feature type="binding site" evidence="1">
    <location>
        <position position="256"/>
    </location>
    <ligand>
        <name>substrate</name>
    </ligand>
</feature>
<feature type="binding site" evidence="1">
    <location>
        <position position="257"/>
    </location>
    <ligand>
        <name>Mn(2+)</name>
        <dbReference type="ChEBI" id="CHEBI:29035"/>
    </ligand>
</feature>
<feature type="binding site" evidence="1">
    <location>
        <position position="360"/>
    </location>
    <ligand>
        <name>substrate</name>
    </ligand>
</feature>
<feature type="binding site" evidence="1">
    <location>
        <position position="388"/>
    </location>
    <ligand>
        <name>Mn(2+)</name>
        <dbReference type="ChEBI" id="CHEBI:29035"/>
    </ligand>
</feature>
<feature type="binding site" evidence="1">
    <location>
        <position position="391"/>
    </location>
    <ligand>
        <name>substrate</name>
    </ligand>
</feature>
<feature type="binding site" evidence="1">
    <location>
        <position position="396"/>
    </location>
    <ligand>
        <name>substrate</name>
    </ligand>
</feature>
<feature type="glycosylation site" description="N-linked (GlcNAc...) asparagine" evidence="2">
    <location>
        <position position="205"/>
    </location>
</feature>
<feature type="glycosylation site" description="N-linked (GlcNAc...) asparagine" evidence="2">
    <location>
        <position position="490"/>
    </location>
</feature>
<feature type="disulfide bond" evidence="3">
    <location>
        <begin position="149"/>
        <end position="383"/>
    </location>
</feature>
<feature type="disulfide bond" evidence="3">
    <location>
        <begin position="374"/>
        <end position="450"/>
    </location>
</feature>
<feature type="disulfide bond" evidence="3">
    <location>
        <begin position="494"/>
        <end position="515"/>
    </location>
</feature>
<feature type="disulfide bond" evidence="3">
    <location>
        <begin position="541"/>
        <end position="553"/>
    </location>
</feature>
<feature type="disulfide bond" evidence="3">
    <location>
        <begin position="578"/>
        <end position="594"/>
    </location>
</feature>
<feature type="splice variant" id="VSP_011242" description="In isoform b." evidence="5">
    <original>G</original>
    <variation>V</variation>
    <location>
        <position position="436"/>
    </location>
</feature>
<feature type="splice variant" id="VSP_011243" description="In isoform b." evidence="5">
    <location>
        <begin position="437"/>
        <end position="605"/>
    </location>
</feature>
<comment type="function">
    <text evidence="1">May catalyze the initial reaction in O-linked oligosaccharide biosynthesis, the transfer of an N-acetyl-D-galactosamine residue to a serine or threonine residue on the protein receptor.</text>
</comment>
<comment type="catalytic activity">
    <reaction>
        <text>L-seryl-[protein] + UDP-N-acetyl-alpha-D-galactosamine = a 3-O-[N-acetyl-alpha-D-galactosaminyl]-L-seryl-[protein] + UDP + H(+)</text>
        <dbReference type="Rhea" id="RHEA:23956"/>
        <dbReference type="Rhea" id="RHEA-COMP:9863"/>
        <dbReference type="Rhea" id="RHEA-COMP:12788"/>
        <dbReference type="ChEBI" id="CHEBI:15378"/>
        <dbReference type="ChEBI" id="CHEBI:29999"/>
        <dbReference type="ChEBI" id="CHEBI:53604"/>
        <dbReference type="ChEBI" id="CHEBI:58223"/>
        <dbReference type="ChEBI" id="CHEBI:67138"/>
        <dbReference type="EC" id="2.4.1.41"/>
    </reaction>
</comment>
<comment type="catalytic activity">
    <reaction>
        <text>L-threonyl-[protein] + UDP-N-acetyl-alpha-D-galactosamine = a 3-O-[N-acetyl-alpha-D-galactosaminyl]-L-threonyl-[protein] + UDP + H(+)</text>
        <dbReference type="Rhea" id="RHEA:52424"/>
        <dbReference type="Rhea" id="RHEA-COMP:11060"/>
        <dbReference type="Rhea" id="RHEA-COMP:11689"/>
        <dbReference type="ChEBI" id="CHEBI:15378"/>
        <dbReference type="ChEBI" id="CHEBI:30013"/>
        <dbReference type="ChEBI" id="CHEBI:58223"/>
        <dbReference type="ChEBI" id="CHEBI:67138"/>
        <dbReference type="ChEBI" id="CHEBI:87075"/>
        <dbReference type="EC" id="2.4.1.41"/>
    </reaction>
</comment>
<comment type="cofactor">
    <cofactor evidence="1">
        <name>Mn(2+)</name>
        <dbReference type="ChEBI" id="CHEBI:29035"/>
    </cofactor>
</comment>
<comment type="pathway">
    <text>Protein modification; protein glycosylation.</text>
</comment>
<comment type="subcellular location">
    <subcellularLocation>
        <location evidence="1">Golgi apparatus membrane</location>
        <topology evidence="1">Single-pass type II membrane protein</topology>
    </subcellularLocation>
</comment>
<comment type="alternative products">
    <event type="alternative splicing"/>
    <isoform>
        <id>Q7K755-1</id>
        <name>a</name>
        <sequence type="displayed"/>
    </isoform>
    <isoform>
        <id>Q7K755-2</id>
        <name>b</name>
        <sequence type="described" ref="VSP_011242 VSP_011243"/>
    </isoform>
</comment>
<comment type="domain">
    <text evidence="1">There are two conserved domains in the glycosyltransferase region: the N-terminal domain (domain A, also called GT1 motif), which is probably involved in manganese coordination and substrate binding and the C-terminal domain (domain B, also called Gal/GalNAc-T motif), which is probably involved in catalytic reaction and UDP-Gal binding.</text>
</comment>
<comment type="domain">
    <text evidence="1">The ricin B-type lectin domain binds to GalNAc and contributes to the glycopeptide specificity.</text>
</comment>
<comment type="similarity">
    <text evidence="5">Belongs to the glycosyltransferase 2 family. GalNAc-T subfamily.</text>
</comment>
<dbReference type="EC" id="2.4.1.41"/>
<dbReference type="EMBL" id="AL033514">
    <property type="protein sequence ID" value="CAA22098.1"/>
    <property type="molecule type" value="Genomic_DNA"/>
</dbReference>
<dbReference type="EMBL" id="AL033514">
    <property type="protein sequence ID" value="CAE47472.1"/>
    <property type="molecule type" value="Genomic_DNA"/>
</dbReference>
<dbReference type="PIR" id="T27397">
    <property type="entry name" value="T27397"/>
</dbReference>
<dbReference type="RefSeq" id="NP_001022948.1">
    <molecule id="Q7K755-1"/>
    <property type="nucleotide sequence ID" value="NM_001027777.5"/>
</dbReference>
<dbReference type="RefSeq" id="NP_001022949.1">
    <molecule id="Q7K755-2"/>
    <property type="nucleotide sequence ID" value="NM_001027778.5"/>
</dbReference>
<dbReference type="SMR" id="Q7K755"/>
<dbReference type="BioGRID" id="41826">
    <property type="interactions" value="3"/>
</dbReference>
<dbReference type="FunCoup" id="Q7K755">
    <property type="interactions" value="921"/>
</dbReference>
<dbReference type="STRING" id="6239.Y75B8A.9a.1"/>
<dbReference type="CAZy" id="CBM13">
    <property type="family name" value="Carbohydrate-Binding Module Family 13"/>
</dbReference>
<dbReference type="CAZy" id="GT27">
    <property type="family name" value="Glycosyltransferase Family 27"/>
</dbReference>
<dbReference type="GlyCosmos" id="Q7K755">
    <property type="glycosylation" value="2 sites, No reported glycans"/>
</dbReference>
<dbReference type="iPTMnet" id="Q7K755"/>
<dbReference type="PaxDb" id="6239-Y75B8A.9a"/>
<dbReference type="PeptideAtlas" id="Q7K755"/>
<dbReference type="EnsemblMetazoa" id="Y75B8A.9a.1">
    <molecule id="Q7K755-1"/>
    <property type="protein sequence ID" value="Y75B8A.9a.1"/>
    <property type="gene ID" value="WBGene00001636"/>
</dbReference>
<dbReference type="EnsemblMetazoa" id="Y75B8A.9b.1">
    <molecule id="Q7K755-2"/>
    <property type="protein sequence ID" value="Y75B8A.9b.1"/>
    <property type="gene ID" value="WBGene00001636"/>
</dbReference>
<dbReference type="GeneID" id="176647"/>
<dbReference type="KEGG" id="cel:CELE_Y75B8A.9"/>
<dbReference type="UCSC" id="Y75B8A.9a">
    <molecule id="Q7K755-1"/>
    <property type="organism name" value="c. elegans"/>
</dbReference>
<dbReference type="AGR" id="WB:WBGene00001636"/>
<dbReference type="CTD" id="176647"/>
<dbReference type="WormBase" id="Y75B8A.9a">
    <molecule id="Q7K755-1"/>
    <property type="protein sequence ID" value="CE23021"/>
    <property type="gene ID" value="WBGene00001636"/>
    <property type="gene designation" value="gly-11"/>
</dbReference>
<dbReference type="WormBase" id="Y75B8A.9b">
    <molecule id="Q7K755-2"/>
    <property type="protein sequence ID" value="CE35810"/>
    <property type="gene ID" value="WBGene00001636"/>
    <property type="gene designation" value="gly-11"/>
</dbReference>
<dbReference type="eggNOG" id="KOG3736">
    <property type="taxonomic scope" value="Eukaryota"/>
</dbReference>
<dbReference type="GeneTree" id="ENSGT00940000165841"/>
<dbReference type="InParanoid" id="Q7K755"/>
<dbReference type="OMA" id="CHNQGAH"/>
<dbReference type="OrthoDB" id="5988548at2759"/>
<dbReference type="PhylomeDB" id="Q7K755"/>
<dbReference type="Reactome" id="R-CEL-913709">
    <property type="pathway name" value="O-linked glycosylation of mucins"/>
</dbReference>
<dbReference type="UniPathway" id="UPA00378"/>
<dbReference type="PRO" id="PR:Q7K755"/>
<dbReference type="Proteomes" id="UP000001940">
    <property type="component" value="Chromosome III"/>
</dbReference>
<dbReference type="Bgee" id="WBGene00001636">
    <property type="expression patterns" value="Expressed in pharyngeal muscle cell (C elegans) and 3 other cell types or tissues"/>
</dbReference>
<dbReference type="GO" id="GO:0005794">
    <property type="term" value="C:Golgi apparatus"/>
    <property type="evidence" value="ECO:0000318"/>
    <property type="project" value="GO_Central"/>
</dbReference>
<dbReference type="GO" id="GO:0000139">
    <property type="term" value="C:Golgi membrane"/>
    <property type="evidence" value="ECO:0007669"/>
    <property type="project" value="UniProtKB-SubCell"/>
</dbReference>
<dbReference type="GO" id="GO:0030246">
    <property type="term" value="F:carbohydrate binding"/>
    <property type="evidence" value="ECO:0007669"/>
    <property type="project" value="UniProtKB-KW"/>
</dbReference>
<dbReference type="GO" id="GO:0046872">
    <property type="term" value="F:metal ion binding"/>
    <property type="evidence" value="ECO:0007669"/>
    <property type="project" value="UniProtKB-KW"/>
</dbReference>
<dbReference type="GO" id="GO:0005112">
    <property type="term" value="F:Notch binding"/>
    <property type="evidence" value="ECO:0000318"/>
    <property type="project" value="GO_Central"/>
</dbReference>
<dbReference type="GO" id="GO:0004653">
    <property type="term" value="F:polypeptide N-acetylgalactosaminyltransferase activity"/>
    <property type="evidence" value="ECO:0000318"/>
    <property type="project" value="GO_Central"/>
</dbReference>
<dbReference type="GO" id="GO:0006493">
    <property type="term" value="P:protein O-linked glycosylation"/>
    <property type="evidence" value="ECO:0000318"/>
    <property type="project" value="GO_Central"/>
</dbReference>
<dbReference type="GO" id="GO:0008593">
    <property type="term" value="P:regulation of Notch signaling pathway"/>
    <property type="evidence" value="ECO:0000318"/>
    <property type="project" value="GO_Central"/>
</dbReference>
<dbReference type="CDD" id="cd23440">
    <property type="entry name" value="beta-trefoil_Ricin_GALNT11"/>
    <property type="match status" value="1"/>
</dbReference>
<dbReference type="CDD" id="cd02510">
    <property type="entry name" value="pp-GalNAc-T"/>
    <property type="match status" value="1"/>
</dbReference>
<dbReference type="FunFam" id="3.90.550.10:FF:000294">
    <property type="entry name" value="Polypeptide N-acetylgalactosaminyltransferase"/>
    <property type="match status" value="1"/>
</dbReference>
<dbReference type="Gene3D" id="2.80.10.50">
    <property type="match status" value="1"/>
</dbReference>
<dbReference type="Gene3D" id="3.90.550.10">
    <property type="entry name" value="Spore Coat Polysaccharide Biosynthesis Protein SpsA, Chain A"/>
    <property type="match status" value="1"/>
</dbReference>
<dbReference type="InterPro" id="IPR045885">
    <property type="entry name" value="GalNAc-T"/>
</dbReference>
<dbReference type="InterPro" id="IPR001173">
    <property type="entry name" value="Glyco_trans_2-like"/>
</dbReference>
<dbReference type="InterPro" id="IPR029044">
    <property type="entry name" value="Nucleotide-diphossugar_trans"/>
</dbReference>
<dbReference type="InterPro" id="IPR035992">
    <property type="entry name" value="Ricin_B-like_lectins"/>
</dbReference>
<dbReference type="InterPro" id="IPR000772">
    <property type="entry name" value="Ricin_B_lectin"/>
</dbReference>
<dbReference type="PANTHER" id="PTHR11675">
    <property type="entry name" value="N-ACETYLGALACTOSAMINYLTRANSFERASE"/>
    <property type="match status" value="1"/>
</dbReference>
<dbReference type="PANTHER" id="PTHR11675:SF63">
    <property type="entry name" value="POLYPEPTIDE N-ACETYLGALACTOSAMINYLTRANSFERASE"/>
    <property type="match status" value="1"/>
</dbReference>
<dbReference type="Pfam" id="PF00535">
    <property type="entry name" value="Glycos_transf_2"/>
    <property type="match status" value="1"/>
</dbReference>
<dbReference type="Pfam" id="PF00652">
    <property type="entry name" value="Ricin_B_lectin"/>
    <property type="match status" value="1"/>
</dbReference>
<dbReference type="SMART" id="SM00458">
    <property type="entry name" value="RICIN"/>
    <property type="match status" value="1"/>
</dbReference>
<dbReference type="SUPFAM" id="SSF53448">
    <property type="entry name" value="Nucleotide-diphospho-sugar transferases"/>
    <property type="match status" value="1"/>
</dbReference>
<dbReference type="SUPFAM" id="SSF50370">
    <property type="entry name" value="Ricin B-like lectins"/>
    <property type="match status" value="1"/>
</dbReference>
<dbReference type="PROSITE" id="PS50231">
    <property type="entry name" value="RICIN_B_LECTIN"/>
    <property type="match status" value="1"/>
</dbReference>
<name>GLT11_CAEEL</name>
<protein>
    <recommendedName>
        <fullName>Putative polypeptide N-acetylgalactosaminyltransferase 11</fullName>
        <shortName>pp-GaNTase 11</shortName>
        <ecNumber>2.4.1.41</ecNumber>
    </recommendedName>
    <alternativeName>
        <fullName>Protein-UDP acetylgalactosaminyltransferase 11</fullName>
    </alternativeName>
    <alternativeName>
        <fullName>UDP-GalNAc:polypeptide N-acetylgalactosaminyltransferase 11</fullName>
    </alternativeName>
</protein>
<reference key="1">
    <citation type="journal article" date="1998" name="Science">
        <title>Genome sequence of the nematode C. elegans: a platform for investigating biology.</title>
        <authorList>
            <consortium name="The C. elegans sequencing consortium"/>
        </authorList>
    </citation>
    <scope>NUCLEOTIDE SEQUENCE [LARGE SCALE GENOMIC DNA]</scope>
    <scope>ALTERNATIVE SPLICING</scope>
    <source>
        <strain>Bristol N2</strain>
    </source>
</reference>
<gene>
    <name type="primary">gly-11</name>
    <name type="ORF">Y75B8A.9</name>
</gene>
<keyword id="KW-0025">Alternative splicing</keyword>
<keyword id="KW-1015">Disulfide bond</keyword>
<keyword id="KW-0325">Glycoprotein</keyword>
<keyword id="KW-0328">Glycosyltransferase</keyword>
<keyword id="KW-0333">Golgi apparatus</keyword>
<keyword id="KW-0430">Lectin</keyword>
<keyword id="KW-0464">Manganese</keyword>
<keyword id="KW-0472">Membrane</keyword>
<keyword id="KW-0479">Metal-binding</keyword>
<keyword id="KW-1185">Reference proteome</keyword>
<keyword id="KW-0735">Signal-anchor</keyword>
<keyword id="KW-0808">Transferase</keyword>
<keyword id="KW-0812">Transmembrane</keyword>
<keyword id="KW-1133">Transmembrane helix</keyword>